<dbReference type="EMBL" id="CP000771">
    <property type="protein sequence ID" value="ABS60971.1"/>
    <property type="molecule type" value="Genomic_DNA"/>
</dbReference>
<dbReference type="RefSeq" id="WP_011994284.1">
    <property type="nucleotide sequence ID" value="NC_009718.1"/>
</dbReference>
<dbReference type="SMR" id="A7HM38"/>
<dbReference type="STRING" id="381764.Fnod_1124"/>
<dbReference type="KEGG" id="fno:Fnod_1124"/>
<dbReference type="eggNOG" id="COG0096">
    <property type="taxonomic scope" value="Bacteria"/>
</dbReference>
<dbReference type="HOGENOM" id="CLU_098428_0_2_0"/>
<dbReference type="OrthoDB" id="9802617at2"/>
<dbReference type="Proteomes" id="UP000002415">
    <property type="component" value="Chromosome"/>
</dbReference>
<dbReference type="GO" id="GO:1990904">
    <property type="term" value="C:ribonucleoprotein complex"/>
    <property type="evidence" value="ECO:0007669"/>
    <property type="project" value="UniProtKB-KW"/>
</dbReference>
<dbReference type="GO" id="GO:0005840">
    <property type="term" value="C:ribosome"/>
    <property type="evidence" value="ECO:0007669"/>
    <property type="project" value="UniProtKB-KW"/>
</dbReference>
<dbReference type="GO" id="GO:0019843">
    <property type="term" value="F:rRNA binding"/>
    <property type="evidence" value="ECO:0007669"/>
    <property type="project" value="UniProtKB-UniRule"/>
</dbReference>
<dbReference type="GO" id="GO:0003735">
    <property type="term" value="F:structural constituent of ribosome"/>
    <property type="evidence" value="ECO:0007669"/>
    <property type="project" value="InterPro"/>
</dbReference>
<dbReference type="GO" id="GO:0006412">
    <property type="term" value="P:translation"/>
    <property type="evidence" value="ECO:0007669"/>
    <property type="project" value="UniProtKB-UniRule"/>
</dbReference>
<dbReference type="FunFam" id="3.30.1370.30:FF:000002">
    <property type="entry name" value="30S ribosomal protein S8"/>
    <property type="match status" value="1"/>
</dbReference>
<dbReference type="FunFam" id="3.30.1490.10:FF:000001">
    <property type="entry name" value="30S ribosomal protein S8"/>
    <property type="match status" value="1"/>
</dbReference>
<dbReference type="Gene3D" id="3.30.1370.30">
    <property type="match status" value="1"/>
</dbReference>
<dbReference type="Gene3D" id="3.30.1490.10">
    <property type="match status" value="1"/>
</dbReference>
<dbReference type="HAMAP" id="MF_01302_B">
    <property type="entry name" value="Ribosomal_uS8_B"/>
    <property type="match status" value="1"/>
</dbReference>
<dbReference type="InterPro" id="IPR000630">
    <property type="entry name" value="Ribosomal_uS8"/>
</dbReference>
<dbReference type="InterPro" id="IPR047863">
    <property type="entry name" value="Ribosomal_uS8_CS"/>
</dbReference>
<dbReference type="InterPro" id="IPR035987">
    <property type="entry name" value="Ribosomal_uS8_sf"/>
</dbReference>
<dbReference type="NCBIfam" id="NF001109">
    <property type="entry name" value="PRK00136.1"/>
    <property type="match status" value="1"/>
</dbReference>
<dbReference type="PANTHER" id="PTHR11758">
    <property type="entry name" value="40S RIBOSOMAL PROTEIN S15A"/>
    <property type="match status" value="1"/>
</dbReference>
<dbReference type="Pfam" id="PF00410">
    <property type="entry name" value="Ribosomal_S8"/>
    <property type="match status" value="1"/>
</dbReference>
<dbReference type="SUPFAM" id="SSF56047">
    <property type="entry name" value="Ribosomal protein S8"/>
    <property type="match status" value="1"/>
</dbReference>
<dbReference type="PROSITE" id="PS00053">
    <property type="entry name" value="RIBOSOMAL_S8"/>
    <property type="match status" value="1"/>
</dbReference>
<evidence type="ECO:0000255" key="1">
    <source>
        <dbReference type="HAMAP-Rule" id="MF_01302"/>
    </source>
</evidence>
<evidence type="ECO:0000305" key="2"/>
<reference key="1">
    <citation type="submission" date="2007-07" db="EMBL/GenBank/DDBJ databases">
        <title>Complete sequence of Fervidobacterium nodosum Rt17-B1.</title>
        <authorList>
            <consortium name="US DOE Joint Genome Institute"/>
            <person name="Copeland A."/>
            <person name="Lucas S."/>
            <person name="Lapidus A."/>
            <person name="Barry K."/>
            <person name="Glavina del Rio T."/>
            <person name="Dalin E."/>
            <person name="Tice H."/>
            <person name="Pitluck S."/>
            <person name="Saunders E."/>
            <person name="Brettin T."/>
            <person name="Bruce D."/>
            <person name="Detter J.C."/>
            <person name="Han C."/>
            <person name="Schmutz J."/>
            <person name="Larimer F."/>
            <person name="Land M."/>
            <person name="Hauser L."/>
            <person name="Kyrpides N."/>
            <person name="Mikhailova N."/>
            <person name="Nelson K."/>
            <person name="Gogarten J.P."/>
            <person name="Noll K."/>
            <person name="Richardson P."/>
        </authorList>
    </citation>
    <scope>NUCLEOTIDE SEQUENCE [LARGE SCALE GENOMIC DNA]</scope>
    <source>
        <strain>ATCC 35602 / DSM 5306 / Rt17-B1</strain>
    </source>
</reference>
<feature type="chain" id="PRO_1000073192" description="Small ribosomal subunit protein uS8">
    <location>
        <begin position="1"/>
        <end position="134"/>
    </location>
</feature>
<protein>
    <recommendedName>
        <fullName evidence="1">Small ribosomal subunit protein uS8</fullName>
    </recommendedName>
    <alternativeName>
        <fullName evidence="2">30S ribosomal protein S8</fullName>
    </alternativeName>
</protein>
<proteinExistence type="inferred from homology"/>
<sequence>MWSDPIADMLTRIRNANQVFKEQVDVPASNLKKAIADILVREGFIKGYTYIEDGKQGILRIQMKYKGTRKNRERVIHGIVRVSKPGRRIYVGKNNIPRVKNGLGIAIISTSKGVLTDKEAAEHGVGGEVIAYIW</sequence>
<name>RS8_FERNB</name>
<gene>
    <name evidence="1" type="primary">rpsH</name>
    <name type="ordered locus">Fnod_1124</name>
</gene>
<organism>
    <name type="scientific">Fervidobacterium nodosum (strain ATCC 35602 / DSM 5306 / Rt17-B1)</name>
    <dbReference type="NCBI Taxonomy" id="381764"/>
    <lineage>
        <taxon>Bacteria</taxon>
        <taxon>Thermotogati</taxon>
        <taxon>Thermotogota</taxon>
        <taxon>Thermotogae</taxon>
        <taxon>Thermotogales</taxon>
        <taxon>Fervidobacteriaceae</taxon>
        <taxon>Fervidobacterium</taxon>
    </lineage>
</organism>
<accession>A7HM38</accession>
<keyword id="KW-1185">Reference proteome</keyword>
<keyword id="KW-0687">Ribonucleoprotein</keyword>
<keyword id="KW-0689">Ribosomal protein</keyword>
<keyword id="KW-0694">RNA-binding</keyword>
<keyword id="KW-0699">rRNA-binding</keyword>
<comment type="function">
    <text evidence="1">One of the primary rRNA binding proteins, it binds directly to 16S rRNA central domain where it helps coordinate assembly of the platform of the 30S subunit.</text>
</comment>
<comment type="subunit">
    <text evidence="1">Part of the 30S ribosomal subunit. Contacts proteins S5 and S12.</text>
</comment>
<comment type="similarity">
    <text evidence="1">Belongs to the universal ribosomal protein uS8 family.</text>
</comment>